<name>PLT2_ARATH</name>
<proteinExistence type="inferred from homology"/>
<sequence>MSSSGEERGVVVAESEPPRGNRSRFAFACAILASMTSIILGYDIGVMSGAAIFIKDDLKLSDVQLEILMGILNIYSLIGSGAAGRTSDWIGRRYTIVLAGFFFFCGALLMGFATNYPFIMVGRFVAGIGVGYAMMIAPVYTTEVAPASSRGFLSSFPEIFINIGILLGYVSNYFFAKLPEHIGWRFMLGIGAVPSVFLAIGVLAMPESPRWLVMQGRLGDAFKVLDKTSNTKEEAISRLNDIKRAVGIPDDMTDDVIVVPNKKSAGKGVWKDLLVRPTPSVRHILIACLGIHFSQQASGIDAVVLYSPTIFSRAGLKSKNDQLLATVAVGVVKTLFIVVGTCLVDRFGRRALLLTSMGGMFFSLTALGTSLTVIDRNPGQTLKWAIGLAVTTVMTFVATFSLGAGPVTWVYASEIFPVRLRAQGASLGVMLNRLMSGIIGMTFLSLSKGLTIGGAFLLFAGVAVAAWVFFFTFLPETRGVPLEEIESLFGSYSANKKNNVMSKGKQVVDEQ</sequence>
<evidence type="ECO:0000250" key="1"/>
<evidence type="ECO:0000255" key="2"/>
<evidence type="ECO:0000305" key="3"/>
<organism>
    <name type="scientific">Arabidopsis thaliana</name>
    <name type="common">Mouse-ear cress</name>
    <dbReference type="NCBI Taxonomy" id="3702"/>
    <lineage>
        <taxon>Eukaryota</taxon>
        <taxon>Viridiplantae</taxon>
        <taxon>Streptophyta</taxon>
        <taxon>Embryophyta</taxon>
        <taxon>Tracheophyta</taxon>
        <taxon>Spermatophyta</taxon>
        <taxon>Magnoliopsida</taxon>
        <taxon>eudicotyledons</taxon>
        <taxon>Gunneridae</taxon>
        <taxon>Pentapetalae</taxon>
        <taxon>rosids</taxon>
        <taxon>malvids</taxon>
        <taxon>Brassicales</taxon>
        <taxon>Brassicaceae</taxon>
        <taxon>Camelineae</taxon>
        <taxon>Arabidopsis</taxon>
    </lineage>
</organism>
<gene>
    <name type="primary">PLT2</name>
    <name type="ordered locus">At2g16130</name>
    <name type="ORF">F7H1.15</name>
</gene>
<protein>
    <recommendedName>
        <fullName>Putative polyol transporter 2</fullName>
    </recommendedName>
</protein>
<keyword id="KW-0472">Membrane</keyword>
<keyword id="KW-1185">Reference proteome</keyword>
<keyword id="KW-0762">Sugar transport</keyword>
<keyword id="KW-0769">Symport</keyword>
<keyword id="KW-0812">Transmembrane</keyword>
<keyword id="KW-1133">Transmembrane helix</keyword>
<keyword id="KW-0813">Transport</keyword>
<dbReference type="EMBL" id="AC007134">
    <property type="protein sequence ID" value="AAD26955.1"/>
    <property type="molecule type" value="Genomic_DNA"/>
</dbReference>
<dbReference type="EMBL" id="CP002685">
    <property type="protein sequence ID" value="AEC06468.1"/>
    <property type="molecule type" value="Genomic_DNA"/>
</dbReference>
<dbReference type="PIR" id="A84537">
    <property type="entry name" value="A84537"/>
</dbReference>
<dbReference type="SMR" id="Q9XIH6"/>
<dbReference type="BioGRID" id="1469">
    <property type="interactions" value="1"/>
</dbReference>
<dbReference type="STRING" id="3702.Q9XIH6"/>
<dbReference type="GlyGen" id="Q9XIH6">
    <property type="glycosylation" value="1 site"/>
</dbReference>
<dbReference type="PaxDb" id="3702-AT2G16130.1"/>
<dbReference type="ProteomicsDB" id="234735"/>
<dbReference type="EnsemblPlants" id="AT2G16130.1">
    <property type="protein sequence ID" value="AT2G16130.1"/>
    <property type="gene ID" value="AT2G16130"/>
</dbReference>
<dbReference type="GeneID" id="816110"/>
<dbReference type="Gramene" id="AT2G16130.1">
    <property type="protein sequence ID" value="AT2G16130.1"/>
    <property type="gene ID" value="AT2G16130"/>
</dbReference>
<dbReference type="KEGG" id="ath:AT2G16130"/>
<dbReference type="Araport" id="AT2G16130"/>
<dbReference type="TAIR" id="AT2G16130">
    <property type="gene designation" value="PMT2"/>
</dbReference>
<dbReference type="eggNOG" id="KOG0254">
    <property type="taxonomic scope" value="Eukaryota"/>
</dbReference>
<dbReference type="HOGENOM" id="CLU_001265_30_5_1"/>
<dbReference type="InParanoid" id="Q9XIH6"/>
<dbReference type="OMA" id="LQCTSFQ"/>
<dbReference type="PhylomeDB" id="Q9XIH6"/>
<dbReference type="PRO" id="PR:Q9XIH6"/>
<dbReference type="Proteomes" id="UP000006548">
    <property type="component" value="Chromosome 2"/>
</dbReference>
<dbReference type="ExpressionAtlas" id="Q9XIH6">
    <property type="expression patterns" value="baseline and differential"/>
</dbReference>
<dbReference type="GO" id="GO:0005886">
    <property type="term" value="C:plasma membrane"/>
    <property type="evidence" value="ECO:0000314"/>
    <property type="project" value="TAIR"/>
</dbReference>
<dbReference type="GO" id="GO:0005351">
    <property type="term" value="F:carbohydrate:proton symporter activity"/>
    <property type="evidence" value="ECO:0007669"/>
    <property type="project" value="InterPro"/>
</dbReference>
<dbReference type="CDD" id="cd17437">
    <property type="entry name" value="MFS_PLT"/>
    <property type="match status" value="1"/>
</dbReference>
<dbReference type="FunFam" id="1.20.1250.20:FF:000025">
    <property type="entry name" value="probable polyol transporter 4"/>
    <property type="match status" value="1"/>
</dbReference>
<dbReference type="Gene3D" id="1.20.1250.20">
    <property type="entry name" value="MFS general substrate transporter like domains"/>
    <property type="match status" value="1"/>
</dbReference>
<dbReference type="InterPro" id="IPR020846">
    <property type="entry name" value="MFS_dom"/>
</dbReference>
<dbReference type="InterPro" id="IPR005828">
    <property type="entry name" value="MFS_sugar_transport-like"/>
</dbReference>
<dbReference type="InterPro" id="IPR036259">
    <property type="entry name" value="MFS_trans_sf"/>
</dbReference>
<dbReference type="InterPro" id="IPR044776">
    <property type="entry name" value="PLT1-6"/>
</dbReference>
<dbReference type="InterPro" id="IPR045262">
    <property type="entry name" value="STP/PLT_plant"/>
</dbReference>
<dbReference type="InterPro" id="IPR003663">
    <property type="entry name" value="Sugar/inositol_transpt"/>
</dbReference>
<dbReference type="InterPro" id="IPR005829">
    <property type="entry name" value="Sugar_transporter_CS"/>
</dbReference>
<dbReference type="NCBIfam" id="TIGR00879">
    <property type="entry name" value="SP"/>
    <property type="match status" value="1"/>
</dbReference>
<dbReference type="PANTHER" id="PTHR23500:SF17">
    <property type="entry name" value="POLYOL TRANSPORTER 2-RELATED"/>
    <property type="match status" value="1"/>
</dbReference>
<dbReference type="PANTHER" id="PTHR23500">
    <property type="entry name" value="SOLUTE CARRIER FAMILY 2, FACILITATED GLUCOSE TRANSPORTER"/>
    <property type="match status" value="1"/>
</dbReference>
<dbReference type="Pfam" id="PF00083">
    <property type="entry name" value="Sugar_tr"/>
    <property type="match status" value="1"/>
</dbReference>
<dbReference type="PRINTS" id="PR00171">
    <property type="entry name" value="SUGRTRNSPORT"/>
</dbReference>
<dbReference type="SUPFAM" id="SSF103473">
    <property type="entry name" value="MFS general substrate transporter"/>
    <property type="match status" value="1"/>
</dbReference>
<dbReference type="PROSITE" id="PS50850">
    <property type="entry name" value="MFS"/>
    <property type="match status" value="1"/>
</dbReference>
<dbReference type="PROSITE" id="PS00216">
    <property type="entry name" value="SUGAR_TRANSPORT_1"/>
    <property type="match status" value="1"/>
</dbReference>
<dbReference type="PROSITE" id="PS00217">
    <property type="entry name" value="SUGAR_TRANSPORT_2"/>
    <property type="match status" value="1"/>
</dbReference>
<accession>Q9XIH6</accession>
<comment type="function">
    <text evidence="1">Plasma membrane sugar-proton symporter.</text>
</comment>
<comment type="subcellular location">
    <subcellularLocation>
        <location evidence="1">Membrane</location>
        <topology evidence="1">Multi-pass membrane protein</topology>
    </subcellularLocation>
</comment>
<comment type="similarity">
    <text evidence="3">Belongs to the major facilitator superfamily. Sugar transporter (TC 2.A.1.1) family.</text>
</comment>
<reference key="1">
    <citation type="journal article" date="1999" name="Nature">
        <title>Sequence and analysis of chromosome 2 of the plant Arabidopsis thaliana.</title>
        <authorList>
            <person name="Lin X."/>
            <person name="Kaul S."/>
            <person name="Rounsley S.D."/>
            <person name="Shea T.P."/>
            <person name="Benito M.-I."/>
            <person name="Town C.D."/>
            <person name="Fujii C.Y."/>
            <person name="Mason T.M."/>
            <person name="Bowman C.L."/>
            <person name="Barnstead M.E."/>
            <person name="Feldblyum T.V."/>
            <person name="Buell C.R."/>
            <person name="Ketchum K.A."/>
            <person name="Lee J.J."/>
            <person name="Ronning C.M."/>
            <person name="Koo H.L."/>
            <person name="Moffat K.S."/>
            <person name="Cronin L.A."/>
            <person name="Shen M."/>
            <person name="Pai G."/>
            <person name="Van Aken S."/>
            <person name="Umayam L."/>
            <person name="Tallon L.J."/>
            <person name="Gill J.E."/>
            <person name="Adams M.D."/>
            <person name="Carrera A.J."/>
            <person name="Creasy T.H."/>
            <person name="Goodman H.M."/>
            <person name="Somerville C.R."/>
            <person name="Copenhaver G.P."/>
            <person name="Preuss D."/>
            <person name="Nierman W.C."/>
            <person name="White O."/>
            <person name="Eisen J.A."/>
            <person name="Salzberg S.L."/>
            <person name="Fraser C.M."/>
            <person name="Venter J.C."/>
        </authorList>
    </citation>
    <scope>NUCLEOTIDE SEQUENCE [LARGE SCALE GENOMIC DNA]</scope>
    <source>
        <strain>cv. Columbia</strain>
    </source>
</reference>
<reference key="2">
    <citation type="journal article" date="2017" name="Plant J.">
        <title>Araport11: a complete reannotation of the Arabidopsis thaliana reference genome.</title>
        <authorList>
            <person name="Cheng C.Y."/>
            <person name="Krishnakumar V."/>
            <person name="Chan A.P."/>
            <person name="Thibaud-Nissen F."/>
            <person name="Schobel S."/>
            <person name="Town C.D."/>
        </authorList>
    </citation>
    <scope>GENOME REANNOTATION</scope>
    <source>
        <strain>cv. Columbia</strain>
    </source>
</reference>
<reference key="3">
    <citation type="journal article" date="2006" name="BMC Evol. Biol.">
        <title>The monosaccharide transporter gene family in land plants is ancient and shows differential subfamily expression and expansion across lineages.</title>
        <authorList>
            <person name="Johnson D.A."/>
            <person name="Hill J.P."/>
            <person name="Thomas M.A."/>
        </authorList>
    </citation>
    <scope>GENE FAMILY</scope>
</reference>
<feature type="chain" id="PRO_0000259870" description="Putative polyol transporter 2">
    <location>
        <begin position="1"/>
        <end position="511"/>
    </location>
</feature>
<feature type="transmembrane region" description="Helical; Name=1" evidence="2">
    <location>
        <begin position="25"/>
        <end position="45"/>
    </location>
</feature>
<feature type="transmembrane region" description="Helical; Name=2" evidence="2">
    <location>
        <begin position="63"/>
        <end position="83"/>
    </location>
</feature>
<feature type="transmembrane region" description="Helical; Name=3" evidence="2">
    <location>
        <begin position="94"/>
        <end position="114"/>
    </location>
</feature>
<feature type="transmembrane region" description="Helical; Name=4" evidence="2">
    <location>
        <begin position="117"/>
        <end position="137"/>
    </location>
</feature>
<feature type="transmembrane region" description="Helical; Name=5" evidence="2">
    <location>
        <begin position="156"/>
        <end position="176"/>
    </location>
</feature>
<feature type="transmembrane region" description="Helical; Name=6" evidence="2">
    <location>
        <begin position="186"/>
        <end position="206"/>
    </location>
</feature>
<feature type="transmembrane region" description="Helical; Name=7" evidence="2">
    <location>
        <begin position="284"/>
        <end position="304"/>
    </location>
</feature>
<feature type="transmembrane region" description="Helical; Name=8" evidence="2">
    <location>
        <begin position="324"/>
        <end position="344"/>
    </location>
</feature>
<feature type="transmembrane region" description="Helical; Name=9" evidence="2">
    <location>
        <begin position="351"/>
        <end position="371"/>
    </location>
</feature>
<feature type="transmembrane region" description="Helical; Name=10" evidence="2">
    <location>
        <begin position="384"/>
        <end position="404"/>
    </location>
</feature>
<feature type="transmembrane region" description="Helical; Name=11" evidence="2">
    <location>
        <begin position="424"/>
        <end position="444"/>
    </location>
</feature>
<feature type="transmembrane region" description="Helical; Name=12" evidence="2">
    <location>
        <begin position="454"/>
        <end position="474"/>
    </location>
</feature>